<keyword id="KW-0002">3D-structure</keyword>
<keyword id="KW-0028">Amino-acid biosynthesis</keyword>
<keyword id="KW-0055">Arginine biosynthesis</keyword>
<keyword id="KW-0067">ATP-binding</keyword>
<keyword id="KW-0963">Cytoplasm</keyword>
<keyword id="KW-0418">Kinase</keyword>
<keyword id="KW-0547">Nucleotide-binding</keyword>
<keyword id="KW-1185">Reference proteome</keyword>
<keyword id="KW-0808">Transferase</keyword>
<protein>
    <recommendedName>
        <fullName evidence="1">Acetylglutamate kinase</fullName>
        <ecNumber evidence="1">2.7.2.8</ecNumber>
    </recommendedName>
    <alternativeName>
        <fullName evidence="1">N-acetyl-L-glutamate 5-phosphotransferase</fullName>
    </alternativeName>
    <alternativeName>
        <fullName evidence="1">NAG kinase</fullName>
        <shortName evidence="1">NAGK</shortName>
    </alternativeName>
</protein>
<name>ARGB_SYNE7</name>
<gene>
    <name evidence="1" type="primary">argB</name>
    <name type="ordered locus">Synpcc7942_1496</name>
</gene>
<comment type="function">
    <text evidence="1">Catalyzes the ATP-dependent phosphorylation of N-acetyl-L-glutamate.</text>
</comment>
<comment type="catalytic activity">
    <reaction evidence="1">
        <text>N-acetyl-L-glutamate + ATP = N-acetyl-L-glutamyl 5-phosphate + ADP</text>
        <dbReference type="Rhea" id="RHEA:14629"/>
        <dbReference type="ChEBI" id="CHEBI:30616"/>
        <dbReference type="ChEBI" id="CHEBI:44337"/>
        <dbReference type="ChEBI" id="CHEBI:57936"/>
        <dbReference type="ChEBI" id="CHEBI:456216"/>
        <dbReference type="EC" id="2.7.2.8"/>
    </reaction>
</comment>
<comment type="pathway">
    <text evidence="1">Amino-acid biosynthesis; L-arginine biosynthesis; N(2)-acetyl-L-ornithine from L-glutamate: step 2/4.</text>
</comment>
<comment type="interaction">
    <interactant intactId="EBI-700898">
        <id>Q6V1L5</id>
    </interactant>
    <interactant intactId="EBI-700898">
        <id>Q6V1L5</id>
        <label>argB</label>
    </interactant>
    <organismsDiffer>false</organismsDiffer>
    <experiments>2</experiments>
</comment>
<comment type="interaction">
    <interactant intactId="EBI-700898">
        <id>Q6V1L5</id>
    </interactant>
    <interactant intactId="EBI-700889">
        <id>P0A3F4</id>
        <label>glnB</label>
    </interactant>
    <organismsDiffer>false</organismsDiffer>
    <experiments>12</experiments>
</comment>
<comment type="subcellular location">
    <subcellularLocation>
        <location evidence="1">Cytoplasm</location>
    </subcellularLocation>
</comment>
<comment type="similarity">
    <text evidence="1">Belongs to the acetylglutamate kinase family. ArgB subfamily.</text>
</comment>
<dbReference type="EC" id="2.7.2.8" evidence="1"/>
<dbReference type="EMBL" id="AY354518">
    <property type="protein sequence ID" value="AAQ56594.2"/>
    <property type="molecule type" value="Genomic_DNA"/>
</dbReference>
<dbReference type="EMBL" id="CP000100">
    <property type="protein sequence ID" value="ABB57526.1"/>
    <property type="molecule type" value="Genomic_DNA"/>
</dbReference>
<dbReference type="RefSeq" id="WP_011244792.1">
    <property type="nucleotide sequence ID" value="NZ_JACJTX010000004.1"/>
</dbReference>
<dbReference type="PDB" id="2JJ4">
    <property type="method" value="X-ray"/>
    <property type="resolution" value="3.46 A"/>
    <property type="chains" value="A/B/C=1-301"/>
</dbReference>
<dbReference type="PDB" id="2V5H">
    <property type="method" value="X-ray"/>
    <property type="resolution" value="2.75 A"/>
    <property type="chains" value="A/B/C/D/E/F=1-301"/>
</dbReference>
<dbReference type="PDBsum" id="2JJ4"/>
<dbReference type="PDBsum" id="2V5H"/>
<dbReference type="SMR" id="Q6V1L5"/>
<dbReference type="DIP" id="DIP-35009N"/>
<dbReference type="IntAct" id="Q6V1L5">
    <property type="interactions" value="2"/>
</dbReference>
<dbReference type="STRING" id="1140.Synpcc7942_1496"/>
<dbReference type="PaxDb" id="1140-Synpcc7942_1496"/>
<dbReference type="GeneID" id="72430471"/>
<dbReference type="KEGG" id="syf:Synpcc7942_1496"/>
<dbReference type="eggNOG" id="COG0548">
    <property type="taxonomic scope" value="Bacteria"/>
</dbReference>
<dbReference type="HOGENOM" id="CLU_053680_0_1_3"/>
<dbReference type="OrthoDB" id="9803155at2"/>
<dbReference type="BioCyc" id="SYNEL:SYNPCC7942_1496-MONOMER"/>
<dbReference type="BRENDA" id="2.7.2.8">
    <property type="organism ID" value="7781"/>
</dbReference>
<dbReference type="UniPathway" id="UPA00068">
    <property type="reaction ID" value="UER00107"/>
</dbReference>
<dbReference type="EvolutionaryTrace" id="Q6V1L5"/>
<dbReference type="Proteomes" id="UP000889800">
    <property type="component" value="Chromosome"/>
</dbReference>
<dbReference type="GO" id="GO:0005737">
    <property type="term" value="C:cytoplasm"/>
    <property type="evidence" value="ECO:0007669"/>
    <property type="project" value="UniProtKB-SubCell"/>
</dbReference>
<dbReference type="GO" id="GO:0003991">
    <property type="term" value="F:acetylglutamate kinase activity"/>
    <property type="evidence" value="ECO:0007669"/>
    <property type="project" value="UniProtKB-UniRule"/>
</dbReference>
<dbReference type="GO" id="GO:0005524">
    <property type="term" value="F:ATP binding"/>
    <property type="evidence" value="ECO:0007669"/>
    <property type="project" value="UniProtKB-UniRule"/>
</dbReference>
<dbReference type="GO" id="GO:0042802">
    <property type="term" value="F:identical protein binding"/>
    <property type="evidence" value="ECO:0000353"/>
    <property type="project" value="IntAct"/>
</dbReference>
<dbReference type="GO" id="GO:0042450">
    <property type="term" value="P:arginine biosynthetic process via ornithine"/>
    <property type="evidence" value="ECO:0007669"/>
    <property type="project" value="UniProtKB-UniRule"/>
</dbReference>
<dbReference type="GO" id="GO:0006526">
    <property type="term" value="P:L-arginine biosynthetic process"/>
    <property type="evidence" value="ECO:0007669"/>
    <property type="project" value="UniProtKB-UniPathway"/>
</dbReference>
<dbReference type="CDD" id="cd04250">
    <property type="entry name" value="AAK_NAGK-C"/>
    <property type="match status" value="1"/>
</dbReference>
<dbReference type="FunFam" id="3.40.1160.10:FF:000004">
    <property type="entry name" value="Acetylglutamate kinase"/>
    <property type="match status" value="1"/>
</dbReference>
<dbReference type="Gene3D" id="3.40.1160.10">
    <property type="entry name" value="Acetylglutamate kinase-like"/>
    <property type="match status" value="1"/>
</dbReference>
<dbReference type="HAMAP" id="MF_00082">
    <property type="entry name" value="ArgB"/>
    <property type="match status" value="1"/>
</dbReference>
<dbReference type="InterPro" id="IPR036393">
    <property type="entry name" value="AceGlu_kinase-like_sf"/>
</dbReference>
<dbReference type="InterPro" id="IPR004662">
    <property type="entry name" value="AcgluKinase_fam"/>
</dbReference>
<dbReference type="InterPro" id="IPR037528">
    <property type="entry name" value="ArgB"/>
</dbReference>
<dbReference type="InterPro" id="IPR001048">
    <property type="entry name" value="Asp/Glu/Uridylate_kinase"/>
</dbReference>
<dbReference type="InterPro" id="IPR001057">
    <property type="entry name" value="Glu/AcGlu_kinase"/>
</dbReference>
<dbReference type="InterPro" id="IPR041727">
    <property type="entry name" value="NAGK-C"/>
</dbReference>
<dbReference type="NCBIfam" id="TIGR00761">
    <property type="entry name" value="argB"/>
    <property type="match status" value="1"/>
</dbReference>
<dbReference type="PANTHER" id="PTHR23342">
    <property type="entry name" value="N-ACETYLGLUTAMATE SYNTHASE"/>
    <property type="match status" value="1"/>
</dbReference>
<dbReference type="PANTHER" id="PTHR23342:SF0">
    <property type="entry name" value="N-ACETYLGLUTAMATE SYNTHASE, MITOCHONDRIAL"/>
    <property type="match status" value="1"/>
</dbReference>
<dbReference type="Pfam" id="PF00696">
    <property type="entry name" value="AA_kinase"/>
    <property type="match status" value="1"/>
</dbReference>
<dbReference type="PIRSF" id="PIRSF000728">
    <property type="entry name" value="NAGK"/>
    <property type="match status" value="1"/>
</dbReference>
<dbReference type="PRINTS" id="PR00474">
    <property type="entry name" value="GLU5KINASE"/>
</dbReference>
<dbReference type="SUPFAM" id="SSF53633">
    <property type="entry name" value="Carbamate kinase-like"/>
    <property type="match status" value="1"/>
</dbReference>
<proteinExistence type="evidence at protein level"/>
<feature type="chain" id="PRO_0000264775" description="Acetylglutamate kinase">
    <location>
        <begin position="1"/>
        <end position="301"/>
    </location>
</feature>
<feature type="binding site" evidence="1">
    <location>
        <begin position="70"/>
        <end position="71"/>
    </location>
    <ligand>
        <name>substrate</name>
    </ligand>
</feature>
<feature type="binding site" evidence="1">
    <location>
        <position position="92"/>
    </location>
    <ligand>
        <name>substrate</name>
    </ligand>
</feature>
<feature type="binding site" evidence="1">
    <location>
        <position position="185"/>
    </location>
    <ligand>
        <name>substrate</name>
    </ligand>
</feature>
<feature type="site" description="Transition state stabilizer" evidence="1">
    <location>
        <position position="35"/>
    </location>
</feature>
<feature type="site" description="Transition state stabilizer" evidence="1">
    <location>
        <position position="248"/>
    </location>
</feature>
<feature type="helix" evidence="3">
    <location>
        <begin position="13"/>
        <end position="19"/>
    </location>
</feature>
<feature type="helix" evidence="3">
    <location>
        <begin position="21"/>
        <end position="26"/>
    </location>
</feature>
<feature type="turn" evidence="3">
    <location>
        <begin position="27"/>
        <end position="29"/>
    </location>
</feature>
<feature type="strand" evidence="3">
    <location>
        <begin position="31"/>
        <end position="36"/>
    </location>
</feature>
<feature type="helix" evidence="3">
    <location>
        <begin position="39"/>
        <end position="42"/>
    </location>
</feature>
<feature type="helix" evidence="3">
    <location>
        <begin position="44"/>
        <end position="59"/>
    </location>
</feature>
<feature type="strand" evidence="3">
    <location>
        <begin position="63"/>
        <end position="68"/>
    </location>
</feature>
<feature type="helix" evidence="3">
    <location>
        <begin position="71"/>
        <end position="80"/>
    </location>
</feature>
<feature type="strand" evidence="3">
    <location>
        <begin position="87"/>
        <end position="92"/>
    </location>
</feature>
<feature type="helix" evidence="3">
    <location>
        <begin position="96"/>
        <end position="108"/>
    </location>
</feature>
<feature type="helix" evidence="3">
    <location>
        <begin position="110"/>
        <end position="121"/>
    </location>
</feature>
<feature type="strand" evidence="3">
    <location>
        <begin position="125"/>
        <end position="128"/>
    </location>
</feature>
<feature type="helix" evidence="3">
    <location>
        <begin position="132"/>
        <end position="134"/>
    </location>
</feature>
<feature type="strand" evidence="3">
    <location>
        <begin position="135"/>
        <end position="140"/>
    </location>
</feature>
<feature type="strand" evidence="3">
    <location>
        <begin position="145"/>
        <end position="155"/>
    </location>
</feature>
<feature type="helix" evidence="3">
    <location>
        <begin position="157"/>
        <end position="159"/>
    </location>
</feature>
<feature type="helix" evidence="3">
    <location>
        <begin position="161"/>
        <end position="165"/>
    </location>
</feature>
<feature type="strand" evidence="3">
    <location>
        <begin position="169"/>
        <end position="177"/>
    </location>
</feature>
<feature type="strand" evidence="3">
    <location>
        <begin position="183"/>
        <end position="185"/>
    </location>
</feature>
<feature type="helix" evidence="3">
    <location>
        <begin position="188"/>
        <end position="198"/>
    </location>
</feature>
<feature type="strand" evidence="3">
    <location>
        <begin position="202"/>
        <end position="212"/>
    </location>
</feature>
<feature type="strand" evidence="3">
    <location>
        <begin position="214"/>
        <end position="216"/>
    </location>
</feature>
<feature type="strand" evidence="3">
    <location>
        <begin position="226"/>
        <end position="228"/>
    </location>
</feature>
<feature type="helix" evidence="3">
    <location>
        <begin position="229"/>
        <end position="237"/>
    </location>
</feature>
<feature type="strand" evidence="2">
    <location>
        <begin position="239"/>
        <end position="241"/>
    </location>
</feature>
<feature type="helix" evidence="3">
    <location>
        <begin position="245"/>
        <end position="257"/>
    </location>
</feature>
<feature type="strand" evidence="3">
    <location>
        <begin position="261"/>
        <end position="267"/>
    </location>
</feature>
<feature type="helix" evidence="3">
    <location>
        <begin position="273"/>
        <end position="279"/>
    </location>
</feature>
<feature type="strand" evidence="3">
    <location>
        <begin position="284"/>
        <end position="289"/>
    </location>
</feature>
<organism>
    <name type="scientific">Synechococcus elongatus (strain ATCC 33912 / PCC 7942 / FACHB-805)</name>
    <name type="common">Anacystis nidulans R2</name>
    <dbReference type="NCBI Taxonomy" id="1140"/>
    <lineage>
        <taxon>Bacteria</taxon>
        <taxon>Bacillati</taxon>
        <taxon>Cyanobacteriota</taxon>
        <taxon>Cyanophyceae</taxon>
        <taxon>Synechococcales</taxon>
        <taxon>Synechococcaceae</taxon>
        <taxon>Synechococcus</taxon>
    </lineage>
</organism>
<accession>Q6V1L5</accession>
<sequence length="301" mass="32287">MSSEFIEAGAADRVRILSEALPYLQQFAGRTVVVKYGGAAMKQEELKEAVMRDIVFLACVGMRPVVVHGGGPEINAWLGRVGIEPQFHNGLRVTDADTMEVVEMVLVGRVNKDIVSRINTTGGRAVGFCGTDGRLVLARPHDQEGIGFVGEVNSVNSEVIEPLLERGYIPVISSVAADENGQSFNINADTVAGEIAAALNAEKLILLTDTRGILEDPKRPESLIPRLNIPQSRELIAQGIVGGGMIPKVDCCIRSLAQGVRAAHIIDGRIPHALLLEIFTDAGIGTMIVGSGYHEAHQPWQ</sequence>
<evidence type="ECO:0000255" key="1">
    <source>
        <dbReference type="HAMAP-Rule" id="MF_00082"/>
    </source>
</evidence>
<evidence type="ECO:0007829" key="2">
    <source>
        <dbReference type="PDB" id="2JJ4"/>
    </source>
</evidence>
<evidence type="ECO:0007829" key="3">
    <source>
        <dbReference type="PDB" id="2V5H"/>
    </source>
</evidence>
<reference key="1">
    <citation type="journal article" date="2004" name="J. Bacteriol.">
        <title>Interactions between the nitrogen signal transduction protein PII and N-acetyl glutamate kinase in organisms that perform oxygenic photosynthesis.</title>
        <authorList>
            <person name="Burillo S."/>
            <person name="Luque I."/>
            <person name="Fuentes I."/>
            <person name="Contreras A."/>
        </authorList>
    </citation>
    <scope>NUCLEOTIDE SEQUENCE [GENOMIC DNA]</scope>
</reference>
<reference key="2">
    <citation type="submission" date="2005-08" db="EMBL/GenBank/DDBJ databases">
        <title>Complete sequence of chromosome 1 of Synechococcus elongatus PCC 7942.</title>
        <authorList>
            <consortium name="US DOE Joint Genome Institute"/>
            <person name="Copeland A."/>
            <person name="Lucas S."/>
            <person name="Lapidus A."/>
            <person name="Barry K."/>
            <person name="Detter J.C."/>
            <person name="Glavina T."/>
            <person name="Hammon N."/>
            <person name="Israni S."/>
            <person name="Pitluck S."/>
            <person name="Schmutz J."/>
            <person name="Larimer F."/>
            <person name="Land M."/>
            <person name="Kyrpides N."/>
            <person name="Lykidis A."/>
            <person name="Golden S."/>
            <person name="Richardson P."/>
        </authorList>
    </citation>
    <scope>NUCLEOTIDE SEQUENCE [LARGE SCALE GENOMIC DNA]</scope>
    <source>
        <strain>ATCC 33912 / PCC 7942 / FACHB-805</strain>
    </source>
</reference>